<gene>
    <name evidence="5" type="primary">CDA</name>
</gene>
<keyword id="KW-0119">Carbohydrate metabolism</keyword>
<keyword id="KW-1003">Cell membrane</keyword>
<keyword id="KW-0134">Cell wall</keyword>
<keyword id="KW-0961">Cell wall biogenesis/degradation</keyword>
<keyword id="KW-0146">Chitin degradation</keyword>
<keyword id="KW-0147">Chitin-binding</keyword>
<keyword id="KW-0170">Cobalt</keyword>
<keyword id="KW-0903">Direct protein sequencing</keyword>
<keyword id="KW-0325">Glycoprotein</keyword>
<keyword id="KW-0336">GPI-anchor</keyword>
<keyword id="KW-0378">Hydrolase</keyword>
<keyword id="KW-0449">Lipoprotein</keyword>
<keyword id="KW-0472">Membrane</keyword>
<keyword id="KW-0479">Metal-binding</keyword>
<keyword id="KW-0624">Polysaccharide degradation</keyword>
<keyword id="KW-0964">Secreted</keyword>
<keyword id="KW-0732">Signal</keyword>
<proteinExistence type="evidence at protein level"/>
<name>CDA_AMYRO</name>
<evidence type="ECO:0000250" key="1">
    <source>
        <dbReference type="UniProtKB" id="J9VND2"/>
    </source>
</evidence>
<evidence type="ECO:0000250" key="2">
    <source>
        <dbReference type="UniProtKB" id="Q6DWK3"/>
    </source>
</evidence>
<evidence type="ECO:0000255" key="3"/>
<evidence type="ECO:0000255" key="4">
    <source>
        <dbReference type="PROSITE-ProRule" id="PRU01014"/>
    </source>
</evidence>
<evidence type="ECO:0000303" key="5">
    <source>
    </source>
</evidence>
<evidence type="ECO:0000305" key="6"/>
<comment type="function">
    <text evidence="2">Hydrolyzes the N-acetamido groups of N-acetyl-D-glucosamine residues in chitin to form chitosan and acetate.</text>
</comment>
<comment type="catalytic activity">
    <reaction evidence="2">
        <text>[(1-&gt;4)-N-acetyl-beta-D-glucosaminyl](n) + n H2O = chitosan + n acetate</text>
        <dbReference type="Rhea" id="RHEA:10464"/>
        <dbReference type="Rhea" id="RHEA-COMP:9593"/>
        <dbReference type="Rhea" id="RHEA-COMP:9597"/>
        <dbReference type="ChEBI" id="CHEBI:15377"/>
        <dbReference type="ChEBI" id="CHEBI:17029"/>
        <dbReference type="ChEBI" id="CHEBI:30089"/>
        <dbReference type="ChEBI" id="CHEBI:57704"/>
        <dbReference type="EC" id="3.5.1.41"/>
    </reaction>
    <physiologicalReaction direction="left-to-right" evidence="2">
        <dbReference type="Rhea" id="RHEA:10465"/>
    </physiologicalReaction>
</comment>
<comment type="cofactor">
    <cofactor evidence="2">
        <name>Co(2+)</name>
        <dbReference type="ChEBI" id="CHEBI:48828"/>
    </cofactor>
</comment>
<comment type="subcellular location">
    <subcellularLocation>
        <location evidence="1">Secreted</location>
        <location evidence="1">Cell wall</location>
    </subcellularLocation>
    <subcellularLocation>
        <location evidence="1">Cell membrane</location>
        <topology evidence="3">Lipid-anchor</topology>
        <topology evidence="3">GPI-anchor</topology>
    </subcellularLocation>
</comment>
<comment type="similarity">
    <text evidence="6">Belongs to the polysaccharide deacetylase family.</text>
</comment>
<reference key="1">
    <citation type="journal article" date="1993" name="Proc. Natl. Acad. Sci. U.S.A.">
        <title>The primary structure of a fungal chitin deacetylase reveals the function for two bacterial gene products.</title>
        <authorList>
            <person name="Kafetzopoulos D."/>
            <person name="Thireos G."/>
            <person name="Vournakis J.N."/>
            <person name="Bouriotis V."/>
        </authorList>
    </citation>
    <scope>NUCLEOTIDE SEQUENCE [MRNA]</scope>
    <scope>PROTEIN SEQUENCE OF 22-38</scope>
    <source>
        <strain>ATCC 24905 / CBS 416.77 / DSM 1191</strain>
    </source>
</reference>
<accession>P50325</accession>
<dbReference type="EC" id="3.5.1.41" evidence="2"/>
<dbReference type="EMBL" id="Z19109">
    <property type="protein sequence ID" value="CAA79525.1"/>
    <property type="molecule type" value="mRNA"/>
</dbReference>
<dbReference type="PIR" id="A47713">
    <property type="entry name" value="A47713"/>
</dbReference>
<dbReference type="SMR" id="P50325"/>
<dbReference type="GlyCosmos" id="P50325">
    <property type="glycosylation" value="9 sites, No reported glycans"/>
</dbReference>
<dbReference type="BRENDA" id="3.5.1.41">
    <property type="organism ID" value="3460"/>
</dbReference>
<dbReference type="GO" id="GO:0005576">
    <property type="term" value="C:extracellular region"/>
    <property type="evidence" value="ECO:0007669"/>
    <property type="project" value="UniProtKB-KW"/>
</dbReference>
<dbReference type="GO" id="GO:0005886">
    <property type="term" value="C:plasma membrane"/>
    <property type="evidence" value="ECO:0007669"/>
    <property type="project" value="UniProtKB-SubCell"/>
</dbReference>
<dbReference type="GO" id="GO:0098552">
    <property type="term" value="C:side of membrane"/>
    <property type="evidence" value="ECO:0007669"/>
    <property type="project" value="UniProtKB-KW"/>
</dbReference>
<dbReference type="GO" id="GO:0008061">
    <property type="term" value="F:chitin binding"/>
    <property type="evidence" value="ECO:0007669"/>
    <property type="project" value="UniProtKB-KW"/>
</dbReference>
<dbReference type="GO" id="GO:0004099">
    <property type="term" value="F:chitin deacetylase activity"/>
    <property type="evidence" value="ECO:0007669"/>
    <property type="project" value="UniProtKB-EC"/>
</dbReference>
<dbReference type="GO" id="GO:0046872">
    <property type="term" value="F:metal ion binding"/>
    <property type="evidence" value="ECO:0007669"/>
    <property type="project" value="UniProtKB-KW"/>
</dbReference>
<dbReference type="GO" id="GO:0071555">
    <property type="term" value="P:cell wall organization"/>
    <property type="evidence" value="ECO:0007669"/>
    <property type="project" value="UniProtKB-KW"/>
</dbReference>
<dbReference type="GO" id="GO:0006032">
    <property type="term" value="P:chitin catabolic process"/>
    <property type="evidence" value="ECO:0007669"/>
    <property type="project" value="UniProtKB-KW"/>
</dbReference>
<dbReference type="GO" id="GO:0009272">
    <property type="term" value="P:fungal-type cell wall biogenesis"/>
    <property type="evidence" value="ECO:0007669"/>
    <property type="project" value="UniProtKB-ARBA"/>
</dbReference>
<dbReference type="GO" id="GO:0000272">
    <property type="term" value="P:polysaccharide catabolic process"/>
    <property type="evidence" value="ECO:0007669"/>
    <property type="project" value="UniProtKB-KW"/>
</dbReference>
<dbReference type="CDD" id="cd10952">
    <property type="entry name" value="CE4_MrCDA_like"/>
    <property type="match status" value="1"/>
</dbReference>
<dbReference type="FunFam" id="3.20.20.370:FF:000004">
    <property type="entry name" value="Related to Chitin deacetylase"/>
    <property type="match status" value="1"/>
</dbReference>
<dbReference type="Gene3D" id="3.20.20.370">
    <property type="entry name" value="Glycoside hydrolase/deacetylase"/>
    <property type="match status" value="1"/>
</dbReference>
<dbReference type="InterPro" id="IPR011330">
    <property type="entry name" value="Glyco_hydro/deAcase_b/a-brl"/>
</dbReference>
<dbReference type="InterPro" id="IPR002509">
    <property type="entry name" value="NODB_dom"/>
</dbReference>
<dbReference type="InterPro" id="IPR050248">
    <property type="entry name" value="Polysacc_deacetylase_ArnD"/>
</dbReference>
<dbReference type="PANTHER" id="PTHR10587:SF98">
    <property type="entry name" value="CHITIN DEACETYLASE"/>
    <property type="match status" value="1"/>
</dbReference>
<dbReference type="PANTHER" id="PTHR10587">
    <property type="entry name" value="GLYCOSYL TRANSFERASE-RELATED"/>
    <property type="match status" value="1"/>
</dbReference>
<dbReference type="Pfam" id="PF01522">
    <property type="entry name" value="Polysacc_deac_1"/>
    <property type="match status" value="1"/>
</dbReference>
<dbReference type="SUPFAM" id="SSF88713">
    <property type="entry name" value="Glycoside hydrolase/deacetylase"/>
    <property type="match status" value="1"/>
</dbReference>
<dbReference type="PROSITE" id="PS51677">
    <property type="entry name" value="NODB"/>
    <property type="match status" value="1"/>
</dbReference>
<sequence>MQIKTFALSAAIAQVATLALADTSANYWQSFTSQINPKNISIPSIEQTSSIDPTQECAYYTPDASLFTFNASEWPSIWEVATTNGMNESAEFLSVYNSIDWTKAPNISVRTLDANGNLDTTGYNTATDPDCWWTATTCTSPKISDINDDISKCPEPETWGLTYDDGPNCSHNAFYDYLQEQKLKASMFYIGSNVVDWPYGAMRGVVDGHHIASHTWSHPQMTTKTNQEVLAEFYYTQKAIKLATGLTPRYWRPPYGDIDDRVRWIASQLGLTAVIWNLDTDDWSAGVTTTVEAVEQSYSDYIAMGTNGTFANSGNIVLTHEINTTMSLAVENLPKIISAYKQVIDVATCYNISHPYFEDYEWTNVLNGTKSSATASGSATSASASGGATTAAAHIQASTSGAMSVLPNLALISAFIATLLF</sequence>
<feature type="signal peptide" evidence="3">
    <location>
        <begin position="1"/>
        <end position="21"/>
    </location>
</feature>
<feature type="chain" id="PRO_0000024832" description="Chitin deacetylase">
    <location>
        <begin position="22"/>
        <end position="390"/>
    </location>
</feature>
<feature type="propeptide" id="PRO_0000451832" description="Removed in mature form" evidence="3">
    <location>
        <begin position="391"/>
        <end position="421"/>
    </location>
</feature>
<feature type="domain" description="NodB homology" evidence="4">
    <location>
        <begin position="157"/>
        <end position="349"/>
    </location>
</feature>
<feature type="active site" description="Proton acceptor" evidence="2">
    <location>
        <position position="164"/>
    </location>
</feature>
<feature type="active site" description="Proton donor" evidence="2">
    <location>
        <position position="320"/>
    </location>
</feature>
<feature type="binding site" evidence="2">
    <location>
        <position position="164"/>
    </location>
    <ligand>
        <name>acetate</name>
        <dbReference type="ChEBI" id="CHEBI:30089"/>
    </ligand>
</feature>
<feature type="binding site" evidence="2">
    <location>
        <position position="165"/>
    </location>
    <ligand>
        <name>Co(2+)</name>
        <dbReference type="ChEBI" id="CHEBI:48828"/>
    </ligand>
</feature>
<feature type="binding site" evidence="2">
    <location>
        <position position="214"/>
    </location>
    <ligand>
        <name>Co(2+)</name>
        <dbReference type="ChEBI" id="CHEBI:48828"/>
    </ligand>
</feature>
<feature type="binding site" evidence="2">
    <location>
        <position position="218"/>
    </location>
    <ligand>
        <name>Co(2+)</name>
        <dbReference type="ChEBI" id="CHEBI:48828"/>
    </ligand>
</feature>
<feature type="binding site" evidence="2">
    <location>
        <position position="255"/>
    </location>
    <ligand>
        <name>acetate</name>
        <dbReference type="ChEBI" id="CHEBI:30089"/>
    </ligand>
</feature>
<feature type="lipid moiety-binding region" description="GPI-anchor amidated threonine" evidence="3">
    <location>
        <position position="390"/>
    </location>
</feature>
<feature type="glycosylation site" description="N-linked (GlcNAc...) asparagine" evidence="3">
    <location>
        <position position="39"/>
    </location>
</feature>
<feature type="glycosylation site" description="N-linked (GlcNAc...) asparagine" evidence="3">
    <location>
        <position position="70"/>
    </location>
</feature>
<feature type="glycosylation site" description="N-linked (GlcNAc...) asparagine" evidence="3">
    <location>
        <position position="87"/>
    </location>
</feature>
<feature type="glycosylation site" description="N-linked (GlcNAc...) asparagine" evidence="3">
    <location>
        <position position="106"/>
    </location>
</feature>
<feature type="glycosylation site" description="N-linked (GlcNAc...) asparagine" evidence="3">
    <location>
        <position position="168"/>
    </location>
</feature>
<feature type="glycosylation site" description="N-linked (GlcNAc...) asparagine" evidence="3">
    <location>
        <position position="307"/>
    </location>
</feature>
<feature type="glycosylation site" description="N-linked (GlcNAc...) asparagine" evidence="3">
    <location>
        <position position="323"/>
    </location>
</feature>
<feature type="glycosylation site" description="N-linked (GlcNAc...) asparagine" evidence="3">
    <location>
        <position position="351"/>
    </location>
</feature>
<feature type="glycosylation site" description="N-linked (GlcNAc...) asparagine" evidence="3">
    <location>
        <position position="367"/>
    </location>
</feature>
<protein>
    <recommendedName>
        <fullName evidence="5">Chitin deacetylase</fullName>
        <ecNumber evidence="2">3.5.1.41</ecNumber>
    </recommendedName>
    <alternativeName>
        <fullName evidence="5">MrCDA</fullName>
    </alternativeName>
</protein>
<organism>
    <name type="scientific">Amylomyces rouxii</name>
    <name type="common">Filamentous fungus</name>
    <name type="synonym">Mucor rouxii</name>
    <dbReference type="NCBI Taxonomy" id="29923"/>
    <lineage>
        <taxon>Eukaryota</taxon>
        <taxon>Fungi</taxon>
        <taxon>Fungi incertae sedis</taxon>
        <taxon>Mucoromycota</taxon>
        <taxon>Mucoromycotina</taxon>
        <taxon>Mucoromycetes</taxon>
        <taxon>Mucorales</taxon>
        <taxon>Mucorineae</taxon>
        <taxon>Mucoraceae</taxon>
        <taxon>Amylomyces</taxon>
    </lineage>
</organism>